<accession>A1AG02</accession>
<keyword id="KW-0963">Cytoplasm</keyword>
<keyword id="KW-0489">Methyltransferase</keyword>
<keyword id="KW-1185">Reference proteome</keyword>
<keyword id="KW-0698">rRNA processing</keyword>
<keyword id="KW-0949">S-adenosyl-L-methionine</keyword>
<keyword id="KW-0808">Transferase</keyword>
<name>RLMG_ECOK1</name>
<protein>
    <recommendedName>
        <fullName evidence="1">Ribosomal RNA large subunit methyltransferase G</fullName>
        <ecNumber evidence="1">2.1.1.174</ecNumber>
    </recommendedName>
    <alternativeName>
        <fullName evidence="1">23S rRNA m2G1835 methyltransferase</fullName>
    </alternativeName>
    <alternativeName>
        <fullName evidence="1">rRNA (guanine-N(2)-)-methyltransferase RlmG</fullName>
    </alternativeName>
</protein>
<feature type="chain" id="PRO_0000366462" description="Ribosomal RNA large subunit methyltransferase G">
    <location>
        <begin position="1"/>
        <end position="378"/>
    </location>
</feature>
<comment type="function">
    <text evidence="1">Specifically methylates the guanine in position 1835 (m2G1835) of 23S rRNA.</text>
</comment>
<comment type="catalytic activity">
    <reaction evidence="1">
        <text>guanosine(1835) in 23S rRNA + S-adenosyl-L-methionine = N(2)-methylguanosine(1835) in 23S rRNA + S-adenosyl-L-homocysteine + H(+)</text>
        <dbReference type="Rhea" id="RHEA:42744"/>
        <dbReference type="Rhea" id="RHEA-COMP:10217"/>
        <dbReference type="Rhea" id="RHEA-COMP:10218"/>
        <dbReference type="ChEBI" id="CHEBI:15378"/>
        <dbReference type="ChEBI" id="CHEBI:57856"/>
        <dbReference type="ChEBI" id="CHEBI:59789"/>
        <dbReference type="ChEBI" id="CHEBI:74269"/>
        <dbReference type="ChEBI" id="CHEBI:74481"/>
        <dbReference type="EC" id="2.1.1.174"/>
    </reaction>
</comment>
<comment type="subcellular location">
    <subcellularLocation>
        <location evidence="1">Cytoplasm</location>
    </subcellularLocation>
</comment>
<comment type="similarity">
    <text evidence="1">Belongs to the methyltransferase superfamily. RlmG family.</text>
</comment>
<reference key="1">
    <citation type="journal article" date="2007" name="J. Bacteriol.">
        <title>The genome sequence of avian pathogenic Escherichia coli strain O1:K1:H7 shares strong similarities with human extraintestinal pathogenic E. coli genomes.</title>
        <authorList>
            <person name="Johnson T.J."/>
            <person name="Kariyawasam S."/>
            <person name="Wannemuehler Y."/>
            <person name="Mangiamele P."/>
            <person name="Johnson S.J."/>
            <person name="Doetkott C."/>
            <person name="Skyberg J.A."/>
            <person name="Lynne A.M."/>
            <person name="Johnson J.R."/>
            <person name="Nolan L.K."/>
        </authorList>
    </citation>
    <scope>NUCLEOTIDE SEQUENCE [LARGE SCALE GENOMIC DNA]</scope>
</reference>
<sequence>MSHLDNGFRSLTLQRFPATDDVNPLQAWEAADEYLLQQLDDTEIRGPVLILNDAFGALSCALAEHKPYSIGDSYISELATRENLRLNGIDESSVKFLDSTADYPQQPGVVLIKVPKTLALLEQQLRALRKVVTPDTRIIAGAKARDIHTSTLELFEKVLGPTTTTLAWKKARLINCTFNEPPLADAPQTVSWKLEGTDWTIHNHANVFSRTGLDIGARFFMQHLPENLEGEIVDLGCGNGVIGLTLLDKNPQAKVVFVDESPMAVASSRLNVETNMPEALDRCEFMINNALSGVEPFRFNAVLCNPPFHQQHALTDNVAWEMFHHARRCLKINGELYIVANRHLDYFHKLKKIFGNCTTIATNNKFVVLKAVKLGRRR</sequence>
<evidence type="ECO:0000255" key="1">
    <source>
        <dbReference type="HAMAP-Rule" id="MF_01859"/>
    </source>
</evidence>
<dbReference type="EC" id="2.1.1.174" evidence="1"/>
<dbReference type="EMBL" id="CP000468">
    <property type="protein sequence ID" value="ABJ02592.1"/>
    <property type="molecule type" value="Genomic_DNA"/>
</dbReference>
<dbReference type="RefSeq" id="WP_000018671.1">
    <property type="nucleotide sequence ID" value="NZ_CADILS010000003.1"/>
</dbReference>
<dbReference type="SMR" id="A1AG02"/>
<dbReference type="GeneID" id="86947959"/>
<dbReference type="KEGG" id="ecv:APECO1_3334"/>
<dbReference type="HOGENOM" id="CLU_040288_4_0_6"/>
<dbReference type="Proteomes" id="UP000008216">
    <property type="component" value="Chromosome"/>
</dbReference>
<dbReference type="GO" id="GO:0005737">
    <property type="term" value="C:cytoplasm"/>
    <property type="evidence" value="ECO:0007669"/>
    <property type="project" value="UniProtKB-SubCell"/>
</dbReference>
<dbReference type="GO" id="GO:0052916">
    <property type="term" value="F:23S rRNA (guanine(1835)-N(2))-methyltransferase activity"/>
    <property type="evidence" value="ECO:0007669"/>
    <property type="project" value="UniProtKB-EC"/>
</dbReference>
<dbReference type="GO" id="GO:0003676">
    <property type="term" value="F:nucleic acid binding"/>
    <property type="evidence" value="ECO:0007669"/>
    <property type="project" value="InterPro"/>
</dbReference>
<dbReference type="CDD" id="cd02440">
    <property type="entry name" value="AdoMet_MTases"/>
    <property type="match status" value="1"/>
</dbReference>
<dbReference type="FunFam" id="3.40.50.150:FF:000046">
    <property type="entry name" value="Ribosomal RNA large subunit methyltransferase G"/>
    <property type="match status" value="1"/>
</dbReference>
<dbReference type="FunFam" id="3.40.50.150:FF:000047">
    <property type="entry name" value="Ribosomal RNA large subunit methyltransferase G"/>
    <property type="match status" value="1"/>
</dbReference>
<dbReference type="Gene3D" id="3.40.50.150">
    <property type="entry name" value="Vaccinia Virus protein VP39"/>
    <property type="match status" value="2"/>
</dbReference>
<dbReference type="HAMAP" id="MF_01859">
    <property type="entry name" value="23SrRNA_methyltr_G"/>
    <property type="match status" value="1"/>
</dbReference>
<dbReference type="InterPro" id="IPR002052">
    <property type="entry name" value="DNA_methylase_N6_adenine_CS"/>
</dbReference>
<dbReference type="InterPro" id="IPR017237">
    <property type="entry name" value="rRNA_m2G-MeTrfase_RlmG"/>
</dbReference>
<dbReference type="InterPro" id="IPR046977">
    <property type="entry name" value="RsmC/RlmG"/>
</dbReference>
<dbReference type="InterPro" id="IPR029063">
    <property type="entry name" value="SAM-dependent_MTases_sf"/>
</dbReference>
<dbReference type="InterPro" id="IPR007848">
    <property type="entry name" value="Small_mtfrase_dom"/>
</dbReference>
<dbReference type="NCBIfam" id="NF011577">
    <property type="entry name" value="PRK15001.1"/>
    <property type="match status" value="1"/>
</dbReference>
<dbReference type="PANTHER" id="PTHR47816:SF5">
    <property type="entry name" value="RIBOSOMAL RNA LARGE SUBUNIT METHYLTRANSFERASE G"/>
    <property type="match status" value="1"/>
</dbReference>
<dbReference type="PANTHER" id="PTHR47816">
    <property type="entry name" value="RIBOSOMAL RNA SMALL SUBUNIT METHYLTRANSFERASE C"/>
    <property type="match status" value="1"/>
</dbReference>
<dbReference type="Pfam" id="PF05175">
    <property type="entry name" value="MTS"/>
    <property type="match status" value="1"/>
</dbReference>
<dbReference type="PIRSF" id="PIRSF037565">
    <property type="entry name" value="RRNA_m2G_Mtase_RsmD_prd"/>
    <property type="match status" value="1"/>
</dbReference>
<dbReference type="SUPFAM" id="SSF53335">
    <property type="entry name" value="S-adenosyl-L-methionine-dependent methyltransferases"/>
    <property type="match status" value="1"/>
</dbReference>
<proteinExistence type="inferred from homology"/>
<organism>
    <name type="scientific">Escherichia coli O1:K1 / APEC</name>
    <dbReference type="NCBI Taxonomy" id="405955"/>
    <lineage>
        <taxon>Bacteria</taxon>
        <taxon>Pseudomonadati</taxon>
        <taxon>Pseudomonadota</taxon>
        <taxon>Gammaproteobacteria</taxon>
        <taxon>Enterobacterales</taxon>
        <taxon>Enterobacteriaceae</taxon>
        <taxon>Escherichia</taxon>
    </lineage>
</organism>
<gene>
    <name evidence="1" type="primary">rlmG</name>
    <name type="ordered locus">Ecok1_30980</name>
    <name type="ORF">APECO1_3334</name>
</gene>